<name>DLTC_STAAU</name>
<gene>
    <name evidence="1" type="primary">dltC</name>
</gene>
<keyword id="KW-0961">Cell wall biogenesis/degradation</keyword>
<keyword id="KW-0963">Cytoplasm</keyword>
<keyword id="KW-0596">Phosphopantetheine</keyword>
<keyword id="KW-0597">Phosphoprotein</keyword>
<proteinExistence type="inferred from homology"/>
<comment type="function">
    <text evidence="1">Carrier protein involved in the D-alanylation of lipoteichoic acid (LTA). The loading of thioester-linked D-alanine onto DltC is catalyzed by D-alanine--D-alanyl carrier protein ligase DltA. The DltC-carried D-alanyl group is further transferred to cell membrane phosphatidylglycerol (PG) by forming an ester bond, probably catalyzed by DltD. D-alanylation of LTA plays an important role in modulating the properties of the cell wall in Gram-positive bacteria, influencing the net charge of the cell wall.</text>
</comment>
<comment type="pathway">
    <text evidence="1">Cell wall biogenesis; lipoteichoic acid biosynthesis.</text>
</comment>
<comment type="subcellular location">
    <subcellularLocation>
        <location evidence="1">Cytoplasm</location>
    </subcellularLocation>
</comment>
<comment type="PTM">
    <text evidence="1">4'-phosphopantetheine is transferred from CoA to a specific serine of apo-DCP.</text>
</comment>
<comment type="similarity">
    <text evidence="1">Belongs to the DltC family.</text>
</comment>
<evidence type="ECO:0000255" key="1">
    <source>
        <dbReference type="HAMAP-Rule" id="MF_00565"/>
    </source>
</evidence>
<feature type="chain" id="PRO_0000213103" description="D-alanyl carrier protein">
    <location>
        <begin position="1"/>
        <end position="78"/>
    </location>
</feature>
<feature type="domain" description="Carrier" evidence="1">
    <location>
        <begin position="1"/>
        <end position="78"/>
    </location>
</feature>
<feature type="modified residue" description="O-(pantetheine 4'-phosphoryl)serine" evidence="1">
    <location>
        <position position="36"/>
    </location>
</feature>
<protein>
    <recommendedName>
        <fullName evidence="1">D-alanyl carrier protein</fullName>
        <shortName evidence="1">DCP</shortName>
    </recommendedName>
    <alternativeName>
        <fullName evidence="1">D-alanine--poly(phosphoribitol) ligase subunit 2</fullName>
    </alternativeName>
</protein>
<sequence length="78" mass="9063">MEFREQVLNLLAEVAENDIVKENPDVEIFEEGIIDSFQTVGLLLEIQNKLDIEVSIMDFDRDEWATPNKIVEALEELR</sequence>
<reference key="1">
    <citation type="submission" date="1996-06" db="EMBL/GenBank/DDBJ databases">
        <authorList>
            <person name="Nakao A."/>
            <person name="Imai S."/>
            <person name="Takano T."/>
        </authorList>
    </citation>
    <scope>NUCLEOTIDE SEQUENCE [GENOMIC DNA]</scope>
    <source>
        <strain>KAN96</strain>
    </source>
</reference>
<organism>
    <name type="scientific">Staphylococcus aureus</name>
    <dbReference type="NCBI Taxonomy" id="1280"/>
    <lineage>
        <taxon>Bacteria</taxon>
        <taxon>Bacillati</taxon>
        <taxon>Bacillota</taxon>
        <taxon>Bacilli</taxon>
        <taxon>Bacillales</taxon>
        <taxon>Staphylococcaceae</taxon>
        <taxon>Staphylococcus</taxon>
    </lineage>
</organism>
<dbReference type="EMBL" id="D86240">
    <property type="protein sequence ID" value="BAA13061.1"/>
    <property type="molecule type" value="Genomic_DNA"/>
</dbReference>
<dbReference type="RefSeq" id="WP_000395692.1">
    <property type="nucleotide sequence ID" value="NZ_WYDB01000003.1"/>
</dbReference>
<dbReference type="SMR" id="P0C426"/>
<dbReference type="GeneID" id="98345253"/>
<dbReference type="OMA" id="ISDQMDD"/>
<dbReference type="OrthoDB" id="6462171at2"/>
<dbReference type="UniPathway" id="UPA00556"/>
<dbReference type="GO" id="GO:0005737">
    <property type="term" value="C:cytoplasm"/>
    <property type="evidence" value="ECO:0007669"/>
    <property type="project" value="UniProtKB-SubCell"/>
</dbReference>
<dbReference type="GO" id="GO:0036370">
    <property type="term" value="F:D-alanyl carrier activity"/>
    <property type="evidence" value="ECO:0007669"/>
    <property type="project" value="UniProtKB-UniRule"/>
</dbReference>
<dbReference type="GO" id="GO:0071555">
    <property type="term" value="P:cell wall organization"/>
    <property type="evidence" value="ECO:0007669"/>
    <property type="project" value="UniProtKB-KW"/>
</dbReference>
<dbReference type="GO" id="GO:0070395">
    <property type="term" value="P:lipoteichoic acid biosynthetic process"/>
    <property type="evidence" value="ECO:0007669"/>
    <property type="project" value="UniProtKB-UniRule"/>
</dbReference>
<dbReference type="Gene3D" id="1.10.1200.10">
    <property type="entry name" value="ACP-like"/>
    <property type="match status" value="1"/>
</dbReference>
<dbReference type="HAMAP" id="MF_00565">
    <property type="entry name" value="DltC"/>
    <property type="match status" value="1"/>
</dbReference>
<dbReference type="InterPro" id="IPR036736">
    <property type="entry name" value="ACP-like_sf"/>
</dbReference>
<dbReference type="InterPro" id="IPR003230">
    <property type="entry name" value="DltC"/>
</dbReference>
<dbReference type="InterPro" id="IPR009081">
    <property type="entry name" value="PP-bd_ACP"/>
</dbReference>
<dbReference type="NCBIfam" id="TIGR01688">
    <property type="entry name" value="dltC"/>
    <property type="match status" value="1"/>
</dbReference>
<dbReference type="NCBIfam" id="NF003464">
    <property type="entry name" value="PRK05087.1"/>
    <property type="match status" value="1"/>
</dbReference>
<dbReference type="Pfam" id="PF00550">
    <property type="entry name" value="PP-binding"/>
    <property type="match status" value="1"/>
</dbReference>
<dbReference type="SUPFAM" id="SSF47336">
    <property type="entry name" value="ACP-like"/>
    <property type="match status" value="1"/>
</dbReference>
<dbReference type="PROSITE" id="PS50075">
    <property type="entry name" value="CARRIER"/>
    <property type="match status" value="1"/>
</dbReference>
<accession>P0C426</accession>
<accession>P0A021</accession>
<accession>Q53663</accession>